<gene>
    <name evidence="1" type="primary">ndhJ</name>
</gene>
<organism>
    <name type="scientific">Lactuca sativa</name>
    <name type="common">Garden lettuce</name>
    <dbReference type="NCBI Taxonomy" id="4236"/>
    <lineage>
        <taxon>Eukaryota</taxon>
        <taxon>Viridiplantae</taxon>
        <taxon>Streptophyta</taxon>
        <taxon>Embryophyta</taxon>
        <taxon>Tracheophyta</taxon>
        <taxon>Spermatophyta</taxon>
        <taxon>Magnoliopsida</taxon>
        <taxon>eudicotyledons</taxon>
        <taxon>Gunneridae</taxon>
        <taxon>Pentapetalae</taxon>
        <taxon>asterids</taxon>
        <taxon>campanulids</taxon>
        <taxon>Asterales</taxon>
        <taxon>Asteraceae</taxon>
        <taxon>Cichorioideae</taxon>
        <taxon>Cichorieae</taxon>
        <taxon>Lactucinae</taxon>
        <taxon>Lactuca</taxon>
    </lineage>
</organism>
<dbReference type="EC" id="7.1.1.-" evidence="1"/>
<dbReference type="EMBL" id="DQ383816">
    <property type="protein sequence ID" value="ABD47236.1"/>
    <property type="molecule type" value="Genomic_DNA"/>
</dbReference>
<dbReference type="EMBL" id="AP007232">
    <property type="protein sequence ID" value="BAE47597.1"/>
    <property type="molecule type" value="Genomic_DNA"/>
</dbReference>
<dbReference type="RefSeq" id="YP_398332.1">
    <property type="nucleotide sequence ID" value="NC_007578.1"/>
</dbReference>
<dbReference type="SMR" id="Q332X5"/>
<dbReference type="GeneID" id="3772796"/>
<dbReference type="KEGG" id="lsv:3772796"/>
<dbReference type="OrthoDB" id="1909959at2759"/>
<dbReference type="GO" id="GO:0009535">
    <property type="term" value="C:chloroplast thylakoid membrane"/>
    <property type="evidence" value="ECO:0007669"/>
    <property type="project" value="UniProtKB-SubCell"/>
</dbReference>
<dbReference type="GO" id="GO:0008137">
    <property type="term" value="F:NADH dehydrogenase (ubiquinone) activity"/>
    <property type="evidence" value="ECO:0007669"/>
    <property type="project" value="InterPro"/>
</dbReference>
<dbReference type="GO" id="GO:0048038">
    <property type="term" value="F:quinone binding"/>
    <property type="evidence" value="ECO:0007669"/>
    <property type="project" value="UniProtKB-KW"/>
</dbReference>
<dbReference type="GO" id="GO:0019684">
    <property type="term" value="P:photosynthesis, light reaction"/>
    <property type="evidence" value="ECO:0007669"/>
    <property type="project" value="UniProtKB-UniRule"/>
</dbReference>
<dbReference type="FunFam" id="3.30.460.80:FF:000004">
    <property type="entry name" value="NAD(P)H-quinone oxidoreductase subunit J, chloroplastic"/>
    <property type="match status" value="1"/>
</dbReference>
<dbReference type="Gene3D" id="3.30.460.80">
    <property type="entry name" value="NADH:ubiquinone oxidoreductase, 30kDa subunit"/>
    <property type="match status" value="1"/>
</dbReference>
<dbReference type="HAMAP" id="MF_01357">
    <property type="entry name" value="NDH1_NuoC"/>
    <property type="match status" value="1"/>
</dbReference>
<dbReference type="InterPro" id="IPR010218">
    <property type="entry name" value="NADH_DH_suC"/>
</dbReference>
<dbReference type="InterPro" id="IPR037232">
    <property type="entry name" value="NADH_quin_OxRdtase_su_C/D-like"/>
</dbReference>
<dbReference type="InterPro" id="IPR001268">
    <property type="entry name" value="NADH_UbQ_OxRdtase_30kDa_su"/>
</dbReference>
<dbReference type="InterPro" id="IPR020396">
    <property type="entry name" value="NADH_UbQ_OxRdtase_CS"/>
</dbReference>
<dbReference type="NCBIfam" id="NF009141">
    <property type="entry name" value="PRK12494.1"/>
    <property type="match status" value="1"/>
</dbReference>
<dbReference type="PANTHER" id="PTHR10884:SF14">
    <property type="entry name" value="NADH DEHYDROGENASE [UBIQUINONE] IRON-SULFUR PROTEIN 3, MITOCHONDRIAL"/>
    <property type="match status" value="1"/>
</dbReference>
<dbReference type="PANTHER" id="PTHR10884">
    <property type="entry name" value="NADH DEHYDROGENASE UBIQUINONE IRON-SULFUR PROTEIN 3"/>
    <property type="match status" value="1"/>
</dbReference>
<dbReference type="Pfam" id="PF00329">
    <property type="entry name" value="Complex1_30kDa"/>
    <property type="match status" value="1"/>
</dbReference>
<dbReference type="SUPFAM" id="SSF143243">
    <property type="entry name" value="Nqo5-like"/>
    <property type="match status" value="1"/>
</dbReference>
<dbReference type="PROSITE" id="PS00542">
    <property type="entry name" value="COMPLEX1_30K"/>
    <property type="match status" value="1"/>
</dbReference>
<geneLocation type="chloroplast"/>
<reference key="1">
    <citation type="submission" date="2004-08" db="EMBL/GenBank/DDBJ databases">
        <title>The complete genome sequence of the Lactuca sativa (lettuce) chloroplast.</title>
        <authorList>
            <person name="Kanamoto H."/>
            <person name="Yamashita A."/>
            <person name="Okumura S."/>
            <person name="Hattori M."/>
            <person name="Tomizawa K."/>
        </authorList>
    </citation>
    <scope>NUCLEOTIDE SEQUENCE [LARGE SCALE GENOMIC DNA]</scope>
</reference>
<reference key="2">
    <citation type="submission" date="2006-01" db="EMBL/GenBank/DDBJ databases">
        <title>A comparison of the first two published chloroplast genomes in Asteraceae: Lactuca and Helianthus.</title>
        <authorList>
            <person name="Timme R.E."/>
            <person name="Kuehl J.V."/>
            <person name="Boore J.L."/>
            <person name="Jansen R.K."/>
        </authorList>
    </citation>
    <scope>NUCLEOTIDE SEQUENCE [LARGE SCALE GENOMIC DNA]</scope>
</reference>
<protein>
    <recommendedName>
        <fullName evidence="1">NAD(P)H-quinone oxidoreductase subunit J, chloroplastic</fullName>
        <ecNumber evidence="1">7.1.1.-</ecNumber>
    </recommendedName>
    <alternativeName>
        <fullName>NAD(P)H dehydrogenase subunit J</fullName>
    </alternativeName>
    <alternativeName>
        <fullName evidence="1">NADH-plastoquinone oxidoreductase subunit J</fullName>
    </alternativeName>
</protein>
<proteinExistence type="inferred from homology"/>
<accession>Q332X5</accession>
<feature type="chain" id="PRO_0000358275" description="NAD(P)H-quinone oxidoreductase subunit J, chloroplastic">
    <location>
        <begin position="1"/>
        <end position="158"/>
    </location>
</feature>
<keyword id="KW-0150">Chloroplast</keyword>
<keyword id="KW-0472">Membrane</keyword>
<keyword id="KW-0520">NAD</keyword>
<keyword id="KW-0521">NADP</keyword>
<keyword id="KW-0934">Plastid</keyword>
<keyword id="KW-0618">Plastoquinone</keyword>
<keyword id="KW-0874">Quinone</keyword>
<keyword id="KW-0793">Thylakoid</keyword>
<keyword id="KW-1278">Translocase</keyword>
<keyword id="KW-0813">Transport</keyword>
<comment type="function">
    <text evidence="1">NDH shuttles electrons from NAD(P)H:plastoquinone, via FMN and iron-sulfur (Fe-S) centers, to quinones in the photosynthetic chain and possibly in a chloroplast respiratory chain. The immediate electron acceptor for the enzyme in this species is believed to be plastoquinone. Couples the redox reaction to proton translocation, and thus conserves the redox energy in a proton gradient.</text>
</comment>
<comment type="catalytic activity">
    <reaction evidence="1">
        <text>a plastoquinone + NADH + (n+1) H(+)(in) = a plastoquinol + NAD(+) + n H(+)(out)</text>
        <dbReference type="Rhea" id="RHEA:42608"/>
        <dbReference type="Rhea" id="RHEA-COMP:9561"/>
        <dbReference type="Rhea" id="RHEA-COMP:9562"/>
        <dbReference type="ChEBI" id="CHEBI:15378"/>
        <dbReference type="ChEBI" id="CHEBI:17757"/>
        <dbReference type="ChEBI" id="CHEBI:57540"/>
        <dbReference type="ChEBI" id="CHEBI:57945"/>
        <dbReference type="ChEBI" id="CHEBI:62192"/>
    </reaction>
</comment>
<comment type="catalytic activity">
    <reaction evidence="1">
        <text>a plastoquinone + NADPH + (n+1) H(+)(in) = a plastoquinol + NADP(+) + n H(+)(out)</text>
        <dbReference type="Rhea" id="RHEA:42612"/>
        <dbReference type="Rhea" id="RHEA-COMP:9561"/>
        <dbReference type="Rhea" id="RHEA-COMP:9562"/>
        <dbReference type="ChEBI" id="CHEBI:15378"/>
        <dbReference type="ChEBI" id="CHEBI:17757"/>
        <dbReference type="ChEBI" id="CHEBI:57783"/>
        <dbReference type="ChEBI" id="CHEBI:58349"/>
        <dbReference type="ChEBI" id="CHEBI:62192"/>
    </reaction>
</comment>
<comment type="subunit">
    <text evidence="1">NDH is composed of at least 16 different subunits, 5 of which are encoded in the nucleus.</text>
</comment>
<comment type="subcellular location">
    <subcellularLocation>
        <location evidence="1">Plastid</location>
        <location evidence="1">Chloroplast thylakoid membrane</location>
        <topology evidence="1">Peripheral membrane protein</topology>
        <orientation evidence="1">Stromal side</orientation>
    </subcellularLocation>
</comment>
<comment type="similarity">
    <text evidence="1">Belongs to the complex I 30 kDa subunit family.</text>
</comment>
<sequence length="158" mass="18501">MQGHLSAWLVKHGLIHRSLGFDYQGIETLQIKPGDWHSIAVILYVYGYNYLRSQCAYDVAPGGLLASVYHLTRIEYGADQPEEVCIKVFAPRRDPRIPSVFWVWKSVDFQERESYDMLGISYDNHPRLKRILMPESWIGWPLRKDYIAPNFYEIQDAH</sequence>
<evidence type="ECO:0000255" key="1">
    <source>
        <dbReference type="HAMAP-Rule" id="MF_01357"/>
    </source>
</evidence>
<name>NDHJ_LACSA</name>